<comment type="function">
    <text evidence="1">Specifically methylates the N4 position of cytidine in position 1402 (C1402) of 16S rRNA.</text>
</comment>
<comment type="catalytic activity">
    <reaction evidence="1">
        <text>cytidine(1402) in 16S rRNA + S-adenosyl-L-methionine = N(4)-methylcytidine(1402) in 16S rRNA + S-adenosyl-L-homocysteine + H(+)</text>
        <dbReference type="Rhea" id="RHEA:42928"/>
        <dbReference type="Rhea" id="RHEA-COMP:10286"/>
        <dbReference type="Rhea" id="RHEA-COMP:10287"/>
        <dbReference type="ChEBI" id="CHEBI:15378"/>
        <dbReference type="ChEBI" id="CHEBI:57856"/>
        <dbReference type="ChEBI" id="CHEBI:59789"/>
        <dbReference type="ChEBI" id="CHEBI:74506"/>
        <dbReference type="ChEBI" id="CHEBI:82748"/>
        <dbReference type="EC" id="2.1.1.199"/>
    </reaction>
</comment>
<comment type="subcellular location">
    <subcellularLocation>
        <location evidence="1">Cytoplasm</location>
    </subcellularLocation>
</comment>
<comment type="similarity">
    <text evidence="1">Belongs to the methyltransferase superfamily. RsmH family.</text>
</comment>
<name>RSMH_CLOBB</name>
<gene>
    <name evidence="1" type="primary">rsmH</name>
    <name type="synonym">mraW</name>
    <name type="ordered locus">CLL_A2448</name>
</gene>
<reference key="1">
    <citation type="submission" date="2008-04" db="EMBL/GenBank/DDBJ databases">
        <title>Complete sequence of Clostridium botulinum strain Eklund.</title>
        <authorList>
            <person name="Brinkac L.M."/>
            <person name="Brown J.L."/>
            <person name="Bruce D."/>
            <person name="Detter C."/>
            <person name="Munk C."/>
            <person name="Smith L.A."/>
            <person name="Smith T.J."/>
            <person name="Sutton G."/>
            <person name="Brettin T.S."/>
        </authorList>
    </citation>
    <scope>NUCLEOTIDE SEQUENCE [LARGE SCALE GENOMIC DNA]</scope>
    <source>
        <strain>Eklund 17B / Type B</strain>
    </source>
</reference>
<organism>
    <name type="scientific">Clostridium botulinum (strain Eklund 17B / Type B)</name>
    <dbReference type="NCBI Taxonomy" id="935198"/>
    <lineage>
        <taxon>Bacteria</taxon>
        <taxon>Bacillati</taxon>
        <taxon>Bacillota</taxon>
        <taxon>Clostridia</taxon>
        <taxon>Eubacteriales</taxon>
        <taxon>Clostridiaceae</taxon>
        <taxon>Clostridium</taxon>
    </lineage>
</organism>
<proteinExistence type="inferred from homology"/>
<sequence length="310" mass="35528">MEFKHISVLLNECLDALDIKDNGIYVDCTLGGAGHSSHILERLSNEGLLIGIDQDRDALKAAKERLKRFENVKYVHSNFYDIDNILQNLDIPKVDGILMDLGVSSYQLDEGARGFSYMKDAPLDMRMNRDNDFSAYEIVNEYSEDELYKIIRNYGEERFAKRISNCIVNRRSDKPIETTMELVDIIKAAIPAKARREGPHPAKRTFQAIRIEVNSELKILNQTIEDGVNRLKPGGRMAIITFHSLEDRIVKLKFRELNDPCTCPREFPMCICGKKPSVRLISRKGIEPTKEEVEENPRSRSAKLRIIEKL</sequence>
<accession>B2TS30</accession>
<feature type="chain" id="PRO_0000386813" description="Ribosomal RNA small subunit methyltransferase H">
    <location>
        <begin position="1"/>
        <end position="310"/>
    </location>
</feature>
<feature type="binding site" evidence="1">
    <location>
        <begin position="33"/>
        <end position="35"/>
    </location>
    <ligand>
        <name>S-adenosyl-L-methionine</name>
        <dbReference type="ChEBI" id="CHEBI:59789"/>
    </ligand>
</feature>
<feature type="binding site" evidence="1">
    <location>
        <position position="53"/>
    </location>
    <ligand>
        <name>S-adenosyl-L-methionine</name>
        <dbReference type="ChEBI" id="CHEBI:59789"/>
    </ligand>
</feature>
<feature type="binding site" evidence="1">
    <location>
        <position position="79"/>
    </location>
    <ligand>
        <name>S-adenosyl-L-methionine</name>
        <dbReference type="ChEBI" id="CHEBI:59789"/>
    </ligand>
</feature>
<feature type="binding site" evidence="1">
    <location>
        <position position="100"/>
    </location>
    <ligand>
        <name>S-adenosyl-L-methionine</name>
        <dbReference type="ChEBI" id="CHEBI:59789"/>
    </ligand>
</feature>
<feature type="binding site" evidence="1">
    <location>
        <position position="107"/>
    </location>
    <ligand>
        <name>S-adenosyl-L-methionine</name>
        <dbReference type="ChEBI" id="CHEBI:59789"/>
    </ligand>
</feature>
<dbReference type="EC" id="2.1.1.199" evidence="1"/>
<dbReference type="EMBL" id="CP001056">
    <property type="protein sequence ID" value="ACD24371.1"/>
    <property type="molecule type" value="Genomic_DNA"/>
</dbReference>
<dbReference type="SMR" id="B2TS30"/>
<dbReference type="KEGG" id="cbk:CLL_A2448"/>
<dbReference type="PATRIC" id="fig|935198.13.peg.2408"/>
<dbReference type="HOGENOM" id="CLU_038422_2_0_9"/>
<dbReference type="Proteomes" id="UP000001195">
    <property type="component" value="Chromosome"/>
</dbReference>
<dbReference type="GO" id="GO:0005737">
    <property type="term" value="C:cytoplasm"/>
    <property type="evidence" value="ECO:0007669"/>
    <property type="project" value="UniProtKB-SubCell"/>
</dbReference>
<dbReference type="GO" id="GO:0071424">
    <property type="term" value="F:rRNA (cytosine-N4-)-methyltransferase activity"/>
    <property type="evidence" value="ECO:0007669"/>
    <property type="project" value="UniProtKB-UniRule"/>
</dbReference>
<dbReference type="GO" id="GO:0070475">
    <property type="term" value="P:rRNA base methylation"/>
    <property type="evidence" value="ECO:0007669"/>
    <property type="project" value="UniProtKB-UniRule"/>
</dbReference>
<dbReference type="FunFam" id="1.10.150.170:FF:000001">
    <property type="entry name" value="Ribosomal RNA small subunit methyltransferase H"/>
    <property type="match status" value="1"/>
</dbReference>
<dbReference type="Gene3D" id="1.10.150.170">
    <property type="entry name" value="Putative methyltransferase TM0872, insert domain"/>
    <property type="match status" value="1"/>
</dbReference>
<dbReference type="Gene3D" id="3.40.50.150">
    <property type="entry name" value="Vaccinia Virus protein VP39"/>
    <property type="match status" value="1"/>
</dbReference>
<dbReference type="HAMAP" id="MF_01007">
    <property type="entry name" value="16SrRNA_methyltr_H"/>
    <property type="match status" value="1"/>
</dbReference>
<dbReference type="InterPro" id="IPR002903">
    <property type="entry name" value="RsmH"/>
</dbReference>
<dbReference type="InterPro" id="IPR023397">
    <property type="entry name" value="SAM-dep_MeTrfase_MraW_recog"/>
</dbReference>
<dbReference type="InterPro" id="IPR029063">
    <property type="entry name" value="SAM-dependent_MTases_sf"/>
</dbReference>
<dbReference type="NCBIfam" id="TIGR00006">
    <property type="entry name" value="16S rRNA (cytosine(1402)-N(4))-methyltransferase RsmH"/>
    <property type="match status" value="1"/>
</dbReference>
<dbReference type="PANTHER" id="PTHR11265:SF0">
    <property type="entry name" value="12S RRNA N4-METHYLCYTIDINE METHYLTRANSFERASE"/>
    <property type="match status" value="1"/>
</dbReference>
<dbReference type="PANTHER" id="PTHR11265">
    <property type="entry name" value="S-ADENOSYL-METHYLTRANSFERASE MRAW"/>
    <property type="match status" value="1"/>
</dbReference>
<dbReference type="Pfam" id="PF01795">
    <property type="entry name" value="Methyltransf_5"/>
    <property type="match status" value="1"/>
</dbReference>
<dbReference type="PIRSF" id="PIRSF004486">
    <property type="entry name" value="MraW"/>
    <property type="match status" value="1"/>
</dbReference>
<dbReference type="SUPFAM" id="SSF81799">
    <property type="entry name" value="Putative methyltransferase TM0872, insert domain"/>
    <property type="match status" value="1"/>
</dbReference>
<dbReference type="SUPFAM" id="SSF53335">
    <property type="entry name" value="S-adenosyl-L-methionine-dependent methyltransferases"/>
    <property type="match status" value="1"/>
</dbReference>
<evidence type="ECO:0000255" key="1">
    <source>
        <dbReference type="HAMAP-Rule" id="MF_01007"/>
    </source>
</evidence>
<protein>
    <recommendedName>
        <fullName evidence="1">Ribosomal RNA small subunit methyltransferase H</fullName>
        <ecNumber evidence="1">2.1.1.199</ecNumber>
    </recommendedName>
    <alternativeName>
        <fullName evidence="1">16S rRNA m(4)C1402 methyltransferase</fullName>
    </alternativeName>
    <alternativeName>
        <fullName evidence="1">rRNA (cytosine-N(4)-)-methyltransferase RsmH</fullName>
    </alternativeName>
</protein>
<keyword id="KW-0963">Cytoplasm</keyword>
<keyword id="KW-0489">Methyltransferase</keyword>
<keyword id="KW-0698">rRNA processing</keyword>
<keyword id="KW-0949">S-adenosyl-L-methionine</keyword>
<keyword id="KW-0808">Transferase</keyword>